<accession>P9WK43</accession>
<accession>L0T6T2</accession>
<accession>P65316</accession>
<accession>P71687</accession>
<reference key="1">
    <citation type="journal article" date="1998" name="Nature">
        <title>Deciphering the biology of Mycobacterium tuberculosis from the complete genome sequence.</title>
        <authorList>
            <person name="Cole S.T."/>
            <person name="Brosch R."/>
            <person name="Parkhill J."/>
            <person name="Garnier T."/>
            <person name="Churcher C.M."/>
            <person name="Harris D.E."/>
            <person name="Gordon S.V."/>
            <person name="Eiglmeier K."/>
            <person name="Gas S."/>
            <person name="Barry C.E. III"/>
            <person name="Tekaia F."/>
            <person name="Badcock K."/>
            <person name="Basham D."/>
            <person name="Brown D."/>
            <person name="Chillingworth T."/>
            <person name="Connor R."/>
            <person name="Davies R.M."/>
            <person name="Devlin K."/>
            <person name="Feltwell T."/>
            <person name="Gentles S."/>
            <person name="Hamlin N."/>
            <person name="Holroyd S."/>
            <person name="Hornsby T."/>
            <person name="Jagels K."/>
            <person name="Krogh A."/>
            <person name="McLean J."/>
            <person name="Moule S."/>
            <person name="Murphy L.D."/>
            <person name="Oliver S."/>
            <person name="Osborne J."/>
            <person name="Quail M.A."/>
            <person name="Rajandream M.A."/>
            <person name="Rogers J."/>
            <person name="Rutter S."/>
            <person name="Seeger K."/>
            <person name="Skelton S."/>
            <person name="Squares S."/>
            <person name="Squares R."/>
            <person name="Sulston J.E."/>
            <person name="Taylor K."/>
            <person name="Whitehead S."/>
            <person name="Barrell B.G."/>
        </authorList>
    </citation>
    <scope>NUCLEOTIDE SEQUENCE [LARGE SCALE GENOMIC DNA]</scope>
    <source>
        <strain>ATCC 25618 / H37Rv</strain>
    </source>
</reference>
<reference key="2">
    <citation type="journal article" date="2011" name="Mol. Cell. Proteomics">
        <title>Proteogenomic analysis of Mycobacterium tuberculosis by high resolution mass spectrometry.</title>
        <authorList>
            <person name="Kelkar D.S."/>
            <person name="Kumar D."/>
            <person name="Kumar P."/>
            <person name="Balakrishnan L."/>
            <person name="Muthusamy B."/>
            <person name="Yadav A.K."/>
            <person name="Shrivastava P."/>
            <person name="Marimuthu A."/>
            <person name="Anand S."/>
            <person name="Sundaram H."/>
            <person name="Kingsbury R."/>
            <person name="Harsha H.C."/>
            <person name="Nair B."/>
            <person name="Prasad T.S."/>
            <person name="Chauhan D.S."/>
            <person name="Katoch K."/>
            <person name="Katoch V.M."/>
            <person name="Kumar P."/>
            <person name="Chaerkady R."/>
            <person name="Ramachandran S."/>
            <person name="Dash D."/>
            <person name="Pandey A."/>
        </authorList>
    </citation>
    <scope>IDENTIFICATION BY MASS SPECTROMETRY [LARGE SCALE ANALYSIS]</scope>
    <source>
        <strain>ATCC 25618 / H37Rv</strain>
    </source>
</reference>
<keyword id="KW-1003">Cell membrane</keyword>
<keyword id="KW-0449">Lipoprotein</keyword>
<keyword id="KW-0472">Membrane</keyword>
<keyword id="KW-0564">Palmitate</keyword>
<keyword id="KW-1185">Reference proteome</keyword>
<keyword id="KW-0732">Signal</keyword>
<keyword id="KW-0812">Transmembrane</keyword>
<keyword id="KW-1133">Transmembrane helix</keyword>
<protein>
    <recommendedName>
        <fullName>Putative lipoprotein LprH</fullName>
    </recommendedName>
</protein>
<name>LPRH_MYCTU</name>
<gene>
    <name type="primary">lprH</name>
    <name type="ordered locus">Rv1418</name>
    <name type="ORF">MTCY21B4.36</name>
</gene>
<feature type="signal peptide" evidence="2">
    <location>
        <begin position="1"/>
        <end position="27"/>
    </location>
</feature>
<feature type="chain" id="PRO_0000018148" description="Putative lipoprotein LprH">
    <location>
        <begin position="28"/>
        <end position="228"/>
    </location>
</feature>
<feature type="transmembrane region" description="Helical" evidence="1">
    <location>
        <begin position="191"/>
        <end position="211"/>
    </location>
</feature>
<feature type="lipid moiety-binding region" description="N-palmitoyl cysteine" evidence="2">
    <location>
        <position position="28"/>
    </location>
</feature>
<feature type="lipid moiety-binding region" description="S-diacylglycerol cysteine" evidence="2">
    <location>
        <position position="28"/>
    </location>
</feature>
<organism>
    <name type="scientific">Mycobacterium tuberculosis (strain ATCC 25618 / H37Rv)</name>
    <dbReference type="NCBI Taxonomy" id="83332"/>
    <lineage>
        <taxon>Bacteria</taxon>
        <taxon>Bacillati</taxon>
        <taxon>Actinomycetota</taxon>
        <taxon>Actinomycetes</taxon>
        <taxon>Mycobacteriales</taxon>
        <taxon>Mycobacteriaceae</taxon>
        <taxon>Mycobacterium</taxon>
        <taxon>Mycobacterium tuberculosis complex</taxon>
    </lineage>
</organism>
<dbReference type="EMBL" id="AL123456">
    <property type="protein sequence ID" value="CCP44177.1"/>
    <property type="molecule type" value="Genomic_DNA"/>
</dbReference>
<dbReference type="PIR" id="G70902">
    <property type="entry name" value="G70902"/>
</dbReference>
<dbReference type="RefSeq" id="NP_215934.1">
    <property type="nucleotide sequence ID" value="NC_000962.3"/>
</dbReference>
<dbReference type="RefSeq" id="WP_003407343.1">
    <property type="nucleotide sequence ID" value="NZ_NVQJ01000038.1"/>
</dbReference>
<dbReference type="STRING" id="83332.Rv1418"/>
<dbReference type="PaxDb" id="83332-Rv1418"/>
<dbReference type="DNASU" id="886687"/>
<dbReference type="GeneID" id="886687"/>
<dbReference type="KEGG" id="mtu:Rv1418"/>
<dbReference type="KEGG" id="mtv:RVBD_1418"/>
<dbReference type="TubercuList" id="Rv1418"/>
<dbReference type="eggNOG" id="ENOG5031XPI">
    <property type="taxonomic scope" value="Bacteria"/>
</dbReference>
<dbReference type="InParanoid" id="P9WK43"/>
<dbReference type="OrthoDB" id="4626583at2"/>
<dbReference type="Proteomes" id="UP000001584">
    <property type="component" value="Chromosome"/>
</dbReference>
<dbReference type="GO" id="GO:0005886">
    <property type="term" value="C:plasma membrane"/>
    <property type="evidence" value="ECO:0007669"/>
    <property type="project" value="UniProtKB-SubCell"/>
</dbReference>
<dbReference type="PROSITE" id="PS51257">
    <property type="entry name" value="PROKAR_LIPOPROTEIN"/>
    <property type="match status" value="1"/>
</dbReference>
<proteinExistence type="evidence at protein level"/>
<sequence>MACLGRPGCRGWAGASLVLVVVLALAACTESVAGRAMRATDRSSGLPTSAKPARARDLLLQDGDRAPFGQVTQSRVGDSYFTSAVPPECSAALLFKGSPLRPDGSSDHAEAAYNVTGPLPYAESVDVYTNVLNVHDVVWNGFRDVSHCRGDAVGVSRAGRSTPMRLRYFATLSDGVLVWTMSNPRWTCDYGLAVVPHAVLVLSACGFKPGFPMAEWASKRRAQLDSQV</sequence>
<comment type="subcellular location">
    <subcellularLocation>
        <location evidence="2">Cell membrane</location>
        <topology evidence="2">Lipid-anchor</topology>
    </subcellularLocation>
</comment>
<evidence type="ECO:0000255" key="1"/>
<evidence type="ECO:0000255" key="2">
    <source>
        <dbReference type="PROSITE-ProRule" id="PRU00303"/>
    </source>
</evidence>